<comment type="function">
    <text evidence="3">Chemotactic activity for lymphocytes but not for monocytes or neutrophils. In thymus, mediates medullary accumulation of thymic dendritic cells and contributes to regulatoy T cell development, playing a role in self-tolerance establishment.</text>
</comment>
<comment type="subcellular location">
    <subcellularLocation>
        <location>Secreted</location>
    </subcellularLocation>
</comment>
<comment type="tissue specificity">
    <text evidence="3">Expressed in activated CD8(+) T cells. In the thymus, expressed by medullary thymic epithelial cells.</text>
</comment>
<comment type="disruption phenotype">
    <text evidence="3">The thymus of knockout mice shows a lower medullary accumulation of dendritic cells. Animals have a defective generation of naturally ocurring regulatory T cells.</text>
</comment>
<comment type="similarity">
    <text evidence="4">Belongs to the intercrine gamma family.</text>
</comment>
<organism>
    <name type="scientific">Mus musculus</name>
    <name type="common">Mouse</name>
    <dbReference type="NCBI Taxonomy" id="10090"/>
    <lineage>
        <taxon>Eukaryota</taxon>
        <taxon>Metazoa</taxon>
        <taxon>Chordata</taxon>
        <taxon>Craniata</taxon>
        <taxon>Vertebrata</taxon>
        <taxon>Euteleostomi</taxon>
        <taxon>Mammalia</taxon>
        <taxon>Eutheria</taxon>
        <taxon>Euarchontoglires</taxon>
        <taxon>Glires</taxon>
        <taxon>Rodentia</taxon>
        <taxon>Myomorpha</taxon>
        <taxon>Muroidea</taxon>
        <taxon>Muridae</taxon>
        <taxon>Murinae</taxon>
        <taxon>Mus</taxon>
        <taxon>Mus</taxon>
    </lineage>
</organism>
<protein>
    <recommendedName>
        <fullName>Lymphotactin</fullName>
    </recommendedName>
    <alternativeName>
        <fullName>C motif chemokine 1</fullName>
    </alternativeName>
    <alternativeName>
        <fullName>Cytokine SCM-1</fullName>
    </alternativeName>
    <alternativeName>
        <fullName>Lymphotaxin</fullName>
    </alternativeName>
    <alternativeName>
        <fullName>Small-inducible cytokine C1</fullName>
    </alternativeName>
</protein>
<keyword id="KW-0145">Chemotaxis</keyword>
<keyword id="KW-0202">Cytokine</keyword>
<keyword id="KW-1015">Disulfide bond</keyword>
<keyword id="KW-1185">Reference proteome</keyword>
<keyword id="KW-0964">Secreted</keyword>
<keyword id="KW-0732">Signal</keyword>
<gene>
    <name type="primary">Xcl1</name>
    <name type="synonym">Lptn</name>
    <name type="synonym">Ltn</name>
    <name type="synonym">Scyc1</name>
</gene>
<feature type="signal peptide" evidence="1">
    <location>
        <begin position="1"/>
        <end position="21"/>
    </location>
</feature>
<feature type="chain" id="PRO_0000005249" description="Lymphotactin">
    <location>
        <begin position="22"/>
        <end position="114"/>
    </location>
</feature>
<feature type="region of interest" description="Disordered" evidence="2">
    <location>
        <begin position="92"/>
        <end position="114"/>
    </location>
</feature>
<feature type="compositionally biased region" description="Polar residues" evidence="2">
    <location>
        <begin position="100"/>
        <end position="114"/>
    </location>
</feature>
<feature type="disulfide bond" evidence="1">
    <location>
        <begin position="32"/>
        <end position="69"/>
    </location>
</feature>
<feature type="sequence conflict" description="In Ref. 1; AAA56752." evidence="4" ref="1">
    <original>I</original>
    <variation>V</variation>
    <location>
        <position position="110"/>
    </location>
</feature>
<reference key="1">
    <citation type="journal article" date="1994" name="Science">
        <title>Lymphotactin: a cytokine that represents a new class of chemokine.</title>
        <authorList>
            <person name="Kelner G.S."/>
            <person name="Zlotnik A."/>
        </authorList>
    </citation>
    <scope>NUCLEOTIDE SEQUENCE [MRNA]</scope>
    <source>
        <strain>BALB/cJ</strain>
        <tissue>Thymus</tissue>
    </source>
</reference>
<reference key="2">
    <citation type="journal article" date="1995" name="FEBS Lett.">
        <title>Molecular cloning of a novel C or gamma type chemokine, SCM-1.</title>
        <authorList>
            <person name="Yoshida T."/>
            <person name="Imai T."/>
            <person name="Kakizaki M."/>
            <person name="Nishimura M."/>
            <person name="Yoshie O."/>
        </authorList>
    </citation>
    <scope>NUCLEOTIDE SEQUENCE [MRNA]</scope>
    <source>
        <strain>BALB/cJ</strain>
        <tissue>Spleen</tissue>
    </source>
</reference>
<reference key="3">
    <citation type="journal article" date="1997" name="Cytokine">
        <title>Murine lymphotactin: gene structure, post-translational modification and inhibition of expression by CD28 costimulation.</title>
        <authorList>
            <person name="Hautamaa D."/>
            <person name="Merica R."/>
            <person name="Chen Z."/>
            <person name="Jenkins M.K."/>
        </authorList>
    </citation>
    <scope>NUCLEOTIDE SEQUENCE [GENOMIC DNA / MRNA]</scope>
</reference>
<reference key="4">
    <citation type="journal article" date="2004" name="Genome Res.">
        <title>The status, quality, and expansion of the NIH full-length cDNA project: the Mammalian Gene Collection (MGC).</title>
        <authorList>
            <consortium name="The MGC Project Team"/>
        </authorList>
    </citation>
    <scope>NUCLEOTIDE SEQUENCE [LARGE SCALE MRNA]</scope>
    <source>
        <strain>C57BL/6J</strain>
        <tissue>Thymus</tissue>
    </source>
</reference>
<reference key="5">
    <citation type="journal article" date="2011" name="J. Exp. Med.">
        <title>Aire-dependent production of XCL1 mediates medullary accumulation of thymic dendritic cells and contributes to regulatory T cell development.</title>
        <authorList>
            <person name="Lei Y."/>
            <person name="Ripen A.M."/>
            <person name="Ishimaru N."/>
            <person name="Ohigashi I."/>
            <person name="Nagasawa T."/>
            <person name="Jeker L.T."/>
            <person name="Boesl M.R."/>
            <person name="Hollaender G.A."/>
            <person name="Hayashi Y."/>
            <person name="Malefyt R.W."/>
            <person name="Nitta T."/>
            <person name="Takahama Y."/>
        </authorList>
    </citation>
    <scope>FUNCTION</scope>
    <scope>DISRUPTION PHENOTYPE</scope>
    <scope>TISSUE SPECIFICITY</scope>
</reference>
<sequence>MRLLLLTFLGVCCLTPWVVEGVGTEVLEESSCVNLQTQRLPVQKIKTYIIWEGAMRAVIFVTKRGLKICADPEAKWVKAAIKTVDGRASTRKNMAETVPTGAQRSTSTAITLTG</sequence>
<dbReference type="EMBL" id="U15607">
    <property type="protein sequence ID" value="AAA56752.1"/>
    <property type="molecule type" value="mRNA"/>
</dbReference>
<dbReference type="EMBL" id="D43769">
    <property type="protein sequence ID" value="BAA07826.1"/>
    <property type="molecule type" value="mRNA"/>
</dbReference>
<dbReference type="EMBL" id="U28493">
    <property type="protein sequence ID" value="AAA69801.1"/>
    <property type="molecule type" value="Genomic_DNA"/>
</dbReference>
<dbReference type="EMBL" id="U28491">
    <property type="protein sequence ID" value="AAA69801.1"/>
    <property type="status" value="JOINED"/>
    <property type="molecule type" value="Genomic_DNA"/>
</dbReference>
<dbReference type="EMBL" id="U28492">
    <property type="protein sequence ID" value="AAA69801.1"/>
    <property type="status" value="JOINED"/>
    <property type="molecule type" value="Genomic_DNA"/>
</dbReference>
<dbReference type="EMBL" id="BC062249">
    <property type="protein sequence ID" value="AAH62249.1"/>
    <property type="molecule type" value="mRNA"/>
</dbReference>
<dbReference type="CCDS" id="CCDS15438.1"/>
<dbReference type="PIR" id="A55248">
    <property type="entry name" value="ETMSL"/>
</dbReference>
<dbReference type="RefSeq" id="NP_032536.1">
    <property type="nucleotide sequence ID" value="NM_008510.3"/>
</dbReference>
<dbReference type="SMR" id="P47993"/>
<dbReference type="FunCoup" id="P47993">
    <property type="interactions" value="879"/>
</dbReference>
<dbReference type="IntAct" id="P47993">
    <property type="interactions" value="1"/>
</dbReference>
<dbReference type="STRING" id="10090.ENSMUSP00000027860"/>
<dbReference type="iPTMnet" id="P47993"/>
<dbReference type="PhosphoSitePlus" id="P47993"/>
<dbReference type="PaxDb" id="10090-ENSMUSP00000027860"/>
<dbReference type="DNASU" id="16963"/>
<dbReference type="Ensembl" id="ENSMUST00000027860.8">
    <property type="protein sequence ID" value="ENSMUSP00000027860.8"/>
    <property type="gene ID" value="ENSMUSG00000026573.8"/>
</dbReference>
<dbReference type="GeneID" id="16963"/>
<dbReference type="KEGG" id="mmu:16963"/>
<dbReference type="UCSC" id="uc007dis.1">
    <property type="organism name" value="mouse"/>
</dbReference>
<dbReference type="AGR" id="MGI:104593"/>
<dbReference type="CTD" id="6375"/>
<dbReference type="MGI" id="MGI:104593">
    <property type="gene designation" value="Xcl1"/>
</dbReference>
<dbReference type="VEuPathDB" id="HostDB:ENSMUSG00000026573"/>
<dbReference type="eggNOG" id="ENOG502S6ZP">
    <property type="taxonomic scope" value="Eukaryota"/>
</dbReference>
<dbReference type="GeneTree" id="ENSGT01130000278316"/>
<dbReference type="HOGENOM" id="CLU_141716_2_0_1"/>
<dbReference type="InParanoid" id="P47993"/>
<dbReference type="OMA" id="IVNYEKQ"/>
<dbReference type="OrthoDB" id="9906867at2759"/>
<dbReference type="PhylomeDB" id="P47993"/>
<dbReference type="TreeFam" id="TF334888"/>
<dbReference type="Reactome" id="R-MMU-380108">
    <property type="pathway name" value="Chemokine receptors bind chemokines"/>
</dbReference>
<dbReference type="Reactome" id="R-MMU-416476">
    <property type="pathway name" value="G alpha (q) signalling events"/>
</dbReference>
<dbReference type="BioGRID-ORCS" id="16963">
    <property type="hits" value="1 hit in 76 CRISPR screens"/>
</dbReference>
<dbReference type="PRO" id="PR:P47993"/>
<dbReference type="Proteomes" id="UP000000589">
    <property type="component" value="Chromosome 1"/>
</dbReference>
<dbReference type="RNAct" id="P47993">
    <property type="molecule type" value="protein"/>
</dbReference>
<dbReference type="Bgee" id="ENSMUSG00000026573">
    <property type="expression patterns" value="Expressed in thymus and 39 other cell types or tissues"/>
</dbReference>
<dbReference type="ExpressionAtlas" id="P47993">
    <property type="expression patterns" value="baseline and differential"/>
</dbReference>
<dbReference type="GO" id="GO:0005615">
    <property type="term" value="C:extracellular space"/>
    <property type="evidence" value="ECO:0000314"/>
    <property type="project" value="BHF-UCL"/>
</dbReference>
<dbReference type="GO" id="GO:0008009">
    <property type="term" value="F:chemokine activity"/>
    <property type="evidence" value="ECO:0000314"/>
    <property type="project" value="BHF-UCL"/>
</dbReference>
<dbReference type="GO" id="GO:0042379">
    <property type="term" value="F:chemokine receptor binding"/>
    <property type="evidence" value="ECO:0000314"/>
    <property type="project" value="BHF-UCL"/>
</dbReference>
<dbReference type="GO" id="GO:0042803">
    <property type="term" value="F:protein homodimerization activity"/>
    <property type="evidence" value="ECO:0000250"/>
    <property type="project" value="BHF-UCL"/>
</dbReference>
<dbReference type="GO" id="GO:0071353">
    <property type="term" value="P:cellular response to interleukin-4"/>
    <property type="evidence" value="ECO:0000314"/>
    <property type="project" value="BHF-UCL"/>
</dbReference>
<dbReference type="GO" id="GO:0071560">
    <property type="term" value="P:cellular response to transforming growth factor beta stimulus"/>
    <property type="evidence" value="ECO:0000314"/>
    <property type="project" value="BHF-UCL"/>
</dbReference>
<dbReference type="GO" id="GO:0006935">
    <property type="term" value="P:chemotaxis"/>
    <property type="evidence" value="ECO:0000314"/>
    <property type="project" value="MGI"/>
</dbReference>
<dbReference type="GO" id="GO:0051649">
    <property type="term" value="P:establishment of localization in cell"/>
    <property type="evidence" value="ECO:0000314"/>
    <property type="project" value="MGI"/>
</dbReference>
<dbReference type="GO" id="GO:0006955">
    <property type="term" value="P:immune response"/>
    <property type="evidence" value="ECO:0007669"/>
    <property type="project" value="InterPro"/>
</dbReference>
<dbReference type="GO" id="GO:0035782">
    <property type="term" value="P:mature natural killer cell chemotaxis"/>
    <property type="evidence" value="ECO:0000314"/>
    <property type="project" value="BHF-UCL"/>
</dbReference>
<dbReference type="GO" id="GO:2000562">
    <property type="term" value="P:negative regulation of CD4-positive, alpha-beta T cell proliferation"/>
    <property type="evidence" value="ECO:0000250"/>
    <property type="project" value="BHF-UCL"/>
</dbReference>
<dbReference type="GO" id="GO:0045892">
    <property type="term" value="P:negative regulation of DNA-templated transcription"/>
    <property type="evidence" value="ECO:0000250"/>
    <property type="project" value="BHF-UCL"/>
</dbReference>
<dbReference type="GO" id="GO:0032703">
    <property type="term" value="P:negative regulation of interleukin-2 production"/>
    <property type="evidence" value="ECO:0000250"/>
    <property type="project" value="BHF-UCL"/>
</dbReference>
<dbReference type="GO" id="GO:2000518">
    <property type="term" value="P:negative regulation of T-helper 1 cell activation"/>
    <property type="evidence" value="ECO:0000250"/>
    <property type="project" value="BHF-UCL"/>
</dbReference>
<dbReference type="GO" id="GO:0032689">
    <property type="term" value="P:negative regulation of type II interferon production"/>
    <property type="evidence" value="ECO:0000250"/>
    <property type="project" value="BHF-UCL"/>
</dbReference>
<dbReference type="GO" id="GO:2000538">
    <property type="term" value="P:positive regulation of B cell chemotaxis"/>
    <property type="evidence" value="ECO:0000314"/>
    <property type="project" value="BHF-UCL"/>
</dbReference>
<dbReference type="GO" id="GO:2000563">
    <property type="term" value="P:positive regulation of CD4-positive, alpha-beta T cell proliferation"/>
    <property type="evidence" value="ECO:0000314"/>
    <property type="project" value="BHF-UCL"/>
</dbReference>
<dbReference type="GO" id="GO:2000566">
    <property type="term" value="P:positive regulation of CD8-positive, alpha-beta T cell proliferation"/>
    <property type="evidence" value="ECO:0000250"/>
    <property type="project" value="BHF-UCL"/>
</dbReference>
<dbReference type="GO" id="GO:2000513">
    <property type="term" value="P:positive regulation of granzyme A production"/>
    <property type="evidence" value="ECO:0000250"/>
    <property type="project" value="BHF-UCL"/>
</dbReference>
<dbReference type="GO" id="GO:0071663">
    <property type="term" value="P:positive regulation of granzyme B production"/>
    <property type="evidence" value="ECO:0000250"/>
    <property type="project" value="BHF-UCL"/>
</dbReference>
<dbReference type="GO" id="GO:0002839">
    <property type="term" value="P:positive regulation of immune response to tumor cell"/>
    <property type="evidence" value="ECO:0000303"/>
    <property type="project" value="BHF-UCL"/>
</dbReference>
<dbReference type="GO" id="GO:2000558">
    <property type="term" value="P:positive regulation of immunoglobulin production in mucosal tissue"/>
    <property type="evidence" value="ECO:0000314"/>
    <property type="project" value="BHF-UCL"/>
</dbReference>
<dbReference type="GO" id="GO:0045089">
    <property type="term" value="P:positive regulation of innate immune response"/>
    <property type="evidence" value="ECO:0000305"/>
    <property type="project" value="BHF-UCL"/>
</dbReference>
<dbReference type="GO" id="GO:0032733">
    <property type="term" value="P:positive regulation of interleukin-10 production"/>
    <property type="evidence" value="ECO:0000250"/>
    <property type="project" value="BHF-UCL"/>
</dbReference>
<dbReference type="GO" id="GO:0002690">
    <property type="term" value="P:positive regulation of leukocyte chemotaxis"/>
    <property type="evidence" value="ECO:0000314"/>
    <property type="project" value="BHF-UCL"/>
</dbReference>
<dbReference type="GO" id="GO:2000503">
    <property type="term" value="P:positive regulation of natural killer cell chemotaxis"/>
    <property type="evidence" value="ECO:0000314"/>
    <property type="project" value="BHF-UCL"/>
</dbReference>
<dbReference type="GO" id="GO:0090023">
    <property type="term" value="P:positive regulation of neutrophil chemotaxis"/>
    <property type="evidence" value="ECO:0000314"/>
    <property type="project" value="BHF-UCL"/>
</dbReference>
<dbReference type="GO" id="GO:0051281">
    <property type="term" value="P:positive regulation of release of sequestered calcium ion into cytosol"/>
    <property type="evidence" value="ECO:0000250"/>
    <property type="project" value="BHF-UCL"/>
</dbReference>
<dbReference type="GO" id="GO:0010820">
    <property type="term" value="P:positive regulation of T cell chemotaxis"/>
    <property type="evidence" value="ECO:0000314"/>
    <property type="project" value="BHF-UCL"/>
</dbReference>
<dbReference type="GO" id="GO:0002726">
    <property type="term" value="P:positive regulation of T cell cytokine production"/>
    <property type="evidence" value="ECO:0000314"/>
    <property type="project" value="BHF-UCL"/>
</dbReference>
<dbReference type="GO" id="GO:0001916">
    <property type="term" value="P:positive regulation of T cell mediated cytotoxicity"/>
    <property type="evidence" value="ECO:0000250"/>
    <property type="project" value="BHF-UCL"/>
</dbReference>
<dbReference type="GO" id="GO:2000556">
    <property type="term" value="P:positive regulation of T-helper 1 cell cytokine production"/>
    <property type="evidence" value="ECO:0000314"/>
    <property type="project" value="BHF-UCL"/>
</dbReference>
<dbReference type="GO" id="GO:2000553">
    <property type="term" value="P:positive regulation of T-helper 2 cell cytokine production"/>
    <property type="evidence" value="ECO:0000314"/>
    <property type="project" value="BHF-UCL"/>
</dbReference>
<dbReference type="GO" id="GO:2000412">
    <property type="term" value="P:positive regulation of thymocyte migration"/>
    <property type="evidence" value="ECO:0000314"/>
    <property type="project" value="BHF-UCL"/>
</dbReference>
<dbReference type="GO" id="GO:0045944">
    <property type="term" value="P:positive regulation of transcription by RNA polymerase II"/>
    <property type="evidence" value="ECO:0000250"/>
    <property type="project" value="BHF-UCL"/>
</dbReference>
<dbReference type="GO" id="GO:0071636">
    <property type="term" value="P:positive regulation of transforming growth factor beta production"/>
    <property type="evidence" value="ECO:0000250"/>
    <property type="project" value="BHF-UCL"/>
</dbReference>
<dbReference type="GO" id="GO:0050727">
    <property type="term" value="P:regulation of inflammatory response"/>
    <property type="evidence" value="ECO:0000250"/>
    <property type="project" value="BHF-UCL"/>
</dbReference>
<dbReference type="GO" id="GO:0051209">
    <property type="term" value="P:release of sequestered calcium ion into cytosol"/>
    <property type="evidence" value="ECO:0000314"/>
    <property type="project" value="BHF-UCL"/>
</dbReference>
<dbReference type="CDD" id="cd00271">
    <property type="entry name" value="Chemokine_C"/>
    <property type="match status" value="1"/>
</dbReference>
<dbReference type="FunFam" id="2.40.50.40:FF:000023">
    <property type="entry name" value="Lymphotactin isoform X1"/>
    <property type="match status" value="1"/>
</dbReference>
<dbReference type="Gene3D" id="2.40.50.40">
    <property type="match status" value="1"/>
</dbReference>
<dbReference type="InterPro" id="IPR039809">
    <property type="entry name" value="Chemokine_b/g/d"/>
</dbReference>
<dbReference type="InterPro" id="IPR001811">
    <property type="entry name" value="Chemokine_IL8-like_dom"/>
</dbReference>
<dbReference type="InterPro" id="IPR008105">
    <property type="entry name" value="Chemokine_XCL1/XCL2"/>
</dbReference>
<dbReference type="InterPro" id="IPR036048">
    <property type="entry name" value="Interleukin_8-like_sf"/>
</dbReference>
<dbReference type="PANTHER" id="PTHR12015:SF101">
    <property type="entry name" value="CYTOKINE SCM-1 BETA-RELATED"/>
    <property type="match status" value="1"/>
</dbReference>
<dbReference type="PANTHER" id="PTHR12015">
    <property type="entry name" value="SMALL INDUCIBLE CYTOKINE A"/>
    <property type="match status" value="1"/>
</dbReference>
<dbReference type="Pfam" id="PF00048">
    <property type="entry name" value="IL8"/>
    <property type="match status" value="1"/>
</dbReference>
<dbReference type="PRINTS" id="PR01731">
    <property type="entry name" value="LYMPHOTACTIN"/>
</dbReference>
<dbReference type="SMART" id="SM00199">
    <property type="entry name" value="SCY"/>
    <property type="match status" value="1"/>
</dbReference>
<dbReference type="SUPFAM" id="SSF54117">
    <property type="entry name" value="Interleukin 8-like chemokines"/>
    <property type="match status" value="1"/>
</dbReference>
<name>XCL1_MOUSE</name>
<proteinExistence type="evidence at transcript level"/>
<accession>P47993</accession>
<evidence type="ECO:0000255" key="1"/>
<evidence type="ECO:0000256" key="2">
    <source>
        <dbReference type="SAM" id="MobiDB-lite"/>
    </source>
</evidence>
<evidence type="ECO:0000269" key="3">
    <source>
    </source>
</evidence>
<evidence type="ECO:0000305" key="4"/>